<accession>Q7RR38</accession>
<organism evidence="7">
    <name type="scientific">Plasmodium yoelii yoelii</name>
    <dbReference type="NCBI Taxonomy" id="73239"/>
    <lineage>
        <taxon>Eukaryota</taxon>
        <taxon>Sar</taxon>
        <taxon>Alveolata</taxon>
        <taxon>Apicomplexa</taxon>
        <taxon>Aconoidasida</taxon>
        <taxon>Haemosporida</taxon>
        <taxon>Plasmodiidae</taxon>
        <taxon>Plasmodium</taxon>
        <taxon>Plasmodium (Vinckeia)</taxon>
    </lineage>
</organism>
<sequence>MNILRMDILSRGGTQEIEHRDGFFNTSFQYVLSACLASFIFGYQVSVLNTIKSYIVVEFEWCSTKTDTSCEDSILKSSFLLASVFIGAVLGSGFSGYLVKFGRRFSLMVIYIFFIFVSILTAISHHFHTILYARLLSGFGIGLITVSVPMYISEMTHKDKKGAYGVLHQLFITFGIFVAVLLGLFLGDGPKINGKSIELSNFEMFWWRFMFFLPTIISLLGIILLIAFYKEETPYFLYENGNIEGSKNILKKIYGPSDVDDALRAIKDAIDQNKAAKESSLSLLSALKIPAYRNVIILGCILSGFQQFTGINVLVANSNELYKEFLDKNLITILSVIMTAVNFLMTFPAIYIIEKIGRKTLLLGGCIGVICAFLPTVIARQVWGPTKIVNGLSIAGTFLMIISFAVSYGPVLWIYLHEMYPSEIKDSAASLASLINWVCAIIVVFPSDIIIKKSPSILFMFFSVMCIIAFLFIMFFIKETKGGEIGTSPYISLEERQKHIGKSKV</sequence>
<proteinExistence type="evidence at protein level"/>
<reference evidence="5" key="1">
    <citation type="journal article" date="2002" name="Biochem. J.">
        <title>Comparative characterization of hexose transporters of Plasmodium knowlesi, Plasmodium yoelii and Toxoplasma gondii highlights functional differences within the apicomplexan family.</title>
        <authorList>
            <person name="Joet T."/>
            <person name="Holterman L."/>
            <person name="Stedman T.T."/>
            <person name="Kocken C.H."/>
            <person name="Van Der Wel A."/>
            <person name="Thomas A.W."/>
            <person name="Krishna S."/>
        </authorList>
    </citation>
    <scope>NUCLEOTIDE SEQUENCE [GENOMIC DNA]</scope>
    <scope>FUNCTION</scope>
    <scope>TRANSPORTER ACTIVITY</scope>
    <scope>ACTIVITY REGULATION</scope>
    <scope>BIOPHYSICOCHEMICAL PROPERTIES</scope>
    <source>
        <strain evidence="4">17XNL</strain>
    </source>
</reference>
<reference evidence="7" key="2">
    <citation type="journal article" date="2002" name="Nature">
        <title>Genome sequence and comparative analysis of the model rodent malaria parasite Plasmodium yoelii yoelii.</title>
        <authorList>
            <person name="Carlton J.M."/>
            <person name="Angiuoli S.V."/>
            <person name="Suh B.B."/>
            <person name="Kooij T.W."/>
            <person name="Pertea M."/>
            <person name="Silva J.C."/>
            <person name="Ermolaeva M.D."/>
            <person name="Allen J.E."/>
            <person name="Selengut J.D."/>
            <person name="Koo H.L."/>
            <person name="Peterson J.D."/>
            <person name="Pop M."/>
            <person name="Kosack D.S."/>
            <person name="Shumway M.F."/>
            <person name="Bidwell S.L."/>
            <person name="Shallom S.J."/>
            <person name="van Aken S.E."/>
            <person name="Riedmuller S.B."/>
            <person name="Feldblyum T.V."/>
            <person name="Cho J.K."/>
            <person name="Quackenbush J."/>
            <person name="Sedegah M."/>
            <person name="Shoaibi A."/>
            <person name="Cummings L.M."/>
            <person name="Florens L."/>
            <person name="Yates J.R. III"/>
            <person name="Raine J.D."/>
            <person name="Sinden R.E."/>
            <person name="Harris M.A."/>
            <person name="Cunningham D.A."/>
            <person name="Preiser P.R."/>
            <person name="Bergman L.W."/>
            <person name="Vaidya A.B."/>
            <person name="van Lin L.H."/>
            <person name="Janse C.J."/>
            <person name="Waters A.P."/>
            <person name="Smith H.O."/>
            <person name="White O.R."/>
            <person name="Salzberg S.L."/>
            <person name="Venter J.C."/>
            <person name="Fraser C.M."/>
            <person name="Hoffman S.L."/>
            <person name="Gardner M.J."/>
            <person name="Carucci D.J."/>
        </authorList>
    </citation>
    <scope>NUCLEOTIDE SEQUENCE [LARGE SCALE GENOMIC DNA]</scope>
    <source>
        <strain evidence="7">17XNL</strain>
    </source>
</reference>
<gene>
    <name evidence="5" type="primary">HT1</name>
    <name evidence="6" type="ORF">PY00899</name>
</gene>
<evidence type="ECO:0000250" key="1">
    <source>
        <dbReference type="UniProtKB" id="Q7KWJ5"/>
    </source>
</evidence>
<evidence type="ECO:0000255" key="2"/>
<evidence type="ECO:0000269" key="3">
    <source>
    </source>
</evidence>
<evidence type="ECO:0000303" key="4">
    <source>
    </source>
</evidence>
<evidence type="ECO:0000305" key="5"/>
<evidence type="ECO:0000312" key="6">
    <source>
        <dbReference type="EMBL" id="EAA19183.1"/>
    </source>
</evidence>
<evidence type="ECO:0000312" key="7">
    <source>
        <dbReference type="Proteomes" id="UP000008553"/>
    </source>
</evidence>
<name>HXT1_PLAYO</name>
<keyword id="KW-1003">Cell membrane</keyword>
<keyword id="KW-1015">Disulfide bond</keyword>
<keyword id="KW-0472">Membrane</keyword>
<keyword id="KW-1185">Reference proteome</keyword>
<keyword id="KW-0762">Sugar transport</keyword>
<keyword id="KW-0812">Transmembrane</keyword>
<keyword id="KW-1133">Transmembrane helix</keyword>
<keyword id="KW-0813">Transport</keyword>
<feature type="chain" id="PRO_0000460197" description="Hexose transporter 1">
    <location>
        <begin position="1"/>
        <end position="505"/>
    </location>
</feature>
<feature type="topological domain" description="Cytoplasmic" evidence="5">
    <location>
        <begin position="1"/>
        <end position="27"/>
    </location>
</feature>
<feature type="transmembrane region" description="Helical" evidence="2">
    <location>
        <begin position="28"/>
        <end position="48"/>
    </location>
</feature>
<feature type="topological domain" description="Extracellular" evidence="5">
    <location>
        <begin position="49"/>
        <end position="78"/>
    </location>
</feature>
<feature type="transmembrane region" description="Helical" evidence="2">
    <location>
        <begin position="79"/>
        <end position="99"/>
    </location>
</feature>
<feature type="topological domain" description="Cytoplasmic" evidence="5">
    <location>
        <begin position="100"/>
        <end position="104"/>
    </location>
</feature>
<feature type="transmembrane region" description="Helical" evidence="2">
    <location>
        <begin position="105"/>
        <end position="125"/>
    </location>
</feature>
<feature type="topological domain" description="Extracellular" evidence="5">
    <location>
        <begin position="126"/>
        <end position="134"/>
    </location>
</feature>
<feature type="transmembrane region" description="Helical" evidence="2">
    <location>
        <begin position="135"/>
        <end position="155"/>
    </location>
</feature>
<feature type="topological domain" description="Cytoplasmic" evidence="5">
    <location>
        <begin position="156"/>
        <end position="165"/>
    </location>
</feature>
<feature type="transmembrane region" description="Helical" evidence="2">
    <location>
        <begin position="166"/>
        <end position="186"/>
    </location>
</feature>
<feature type="topological domain" description="Extracellular" evidence="5">
    <location>
        <begin position="187"/>
        <end position="208"/>
    </location>
</feature>
<feature type="transmembrane region" description="Helical" evidence="2">
    <location>
        <begin position="209"/>
        <end position="229"/>
    </location>
</feature>
<feature type="topological domain" description="Cytoplasmic" evidence="5">
    <location>
        <begin position="230"/>
        <end position="294"/>
    </location>
</feature>
<feature type="transmembrane region" description="Helical" evidence="2">
    <location>
        <begin position="295"/>
        <end position="315"/>
    </location>
</feature>
<feature type="topological domain" description="Extracellular" evidence="5">
    <location>
        <begin position="316"/>
        <end position="332"/>
    </location>
</feature>
<feature type="transmembrane region" description="Helical" evidence="2">
    <location>
        <begin position="333"/>
        <end position="353"/>
    </location>
</feature>
<feature type="topological domain" description="Cytoplasmic" evidence="5">
    <location>
        <begin position="354"/>
        <end position="358"/>
    </location>
</feature>
<feature type="transmembrane region" description="Helical" evidence="2">
    <location>
        <begin position="359"/>
        <end position="379"/>
    </location>
</feature>
<feature type="topological domain" description="Extracellular" evidence="5">
    <location>
        <begin position="380"/>
        <end position="393"/>
    </location>
</feature>
<feature type="transmembrane region" description="Helical" evidence="2">
    <location>
        <begin position="394"/>
        <end position="414"/>
    </location>
</feature>
<feature type="topological domain" description="Cytoplasmic" evidence="5">
    <location>
        <begin position="415"/>
        <end position="430"/>
    </location>
</feature>
<feature type="transmembrane region" description="Helical" evidence="2">
    <location>
        <begin position="431"/>
        <end position="451"/>
    </location>
</feature>
<feature type="topological domain" description="Extracellular" evidence="5">
    <location>
        <begin position="452"/>
        <end position="456"/>
    </location>
</feature>
<feature type="transmembrane region" description="Helical" evidence="2">
    <location>
        <begin position="457"/>
        <end position="477"/>
    </location>
</feature>
<feature type="topological domain" description="Cytoplasmic" evidence="5">
    <location>
        <begin position="478"/>
        <end position="505"/>
    </location>
</feature>
<feature type="binding site" evidence="1">
    <location>
        <position position="169"/>
    </location>
    <ligand>
        <name>alpha-D-glucose</name>
        <dbReference type="ChEBI" id="CHEBI:17925"/>
    </ligand>
</feature>
<feature type="binding site" evidence="1">
    <location>
        <position position="169"/>
    </location>
    <ligand>
        <name>beta-D-glucose</name>
        <dbReference type="ChEBI" id="CHEBI:15903"/>
    </ligand>
</feature>
<feature type="binding site" evidence="1">
    <location>
        <position position="306"/>
    </location>
    <ligand>
        <name>alpha-D-glucose</name>
        <dbReference type="ChEBI" id="CHEBI:17925"/>
    </ligand>
</feature>
<feature type="binding site" evidence="1">
    <location>
        <position position="306"/>
    </location>
    <ligand>
        <name>beta-D-glucose</name>
        <dbReference type="ChEBI" id="CHEBI:15903"/>
    </ligand>
</feature>
<feature type="binding site" evidence="1">
    <location>
        <position position="307"/>
    </location>
    <ligand>
        <name>alpha-D-glucose</name>
        <dbReference type="ChEBI" id="CHEBI:17925"/>
    </ligand>
</feature>
<feature type="binding site" evidence="1">
    <location>
        <position position="312"/>
    </location>
    <ligand>
        <name>alpha-D-glucose</name>
        <dbReference type="ChEBI" id="CHEBI:17925"/>
    </ligand>
</feature>
<feature type="binding site" evidence="1">
    <location>
        <position position="312"/>
    </location>
    <ligand>
        <name>beta-D-glucose</name>
        <dbReference type="ChEBI" id="CHEBI:15903"/>
    </ligand>
</feature>
<feature type="binding site" evidence="1">
    <location>
        <position position="342"/>
    </location>
    <ligand>
        <name>beta-D-glucose</name>
        <dbReference type="ChEBI" id="CHEBI:15903"/>
    </ligand>
</feature>
<feature type="binding site" evidence="1">
    <location>
        <position position="413"/>
    </location>
    <ligand>
        <name>alpha-D-glucose</name>
        <dbReference type="ChEBI" id="CHEBI:17925"/>
    </ligand>
</feature>
<feature type="disulfide bond" evidence="1">
    <location>
        <begin position="62"/>
        <end position="70"/>
    </location>
</feature>
<dbReference type="EMBL" id="AABL01000240">
    <property type="protein sequence ID" value="EAA19183.1"/>
    <property type="molecule type" value="Genomic_DNA"/>
</dbReference>
<dbReference type="SMR" id="Q7RR38"/>
<dbReference type="STRING" id="73239.Q7RR38"/>
<dbReference type="PaxDb" id="73239-Q7RR38"/>
<dbReference type="EnsemblProtists" id="EAA19183">
    <property type="protein sequence ID" value="EAA19183"/>
    <property type="gene ID" value="EAA19183"/>
</dbReference>
<dbReference type="KEGG" id="pyo:PY17X_0303100"/>
<dbReference type="VEuPathDB" id="PlasmoDB:Py17XNL_000303609"/>
<dbReference type="InParanoid" id="Q7RR38"/>
<dbReference type="Proteomes" id="UP000008553">
    <property type="component" value="Unassembled WGS sequence"/>
</dbReference>
<dbReference type="GO" id="GO:0005886">
    <property type="term" value="C:plasma membrane"/>
    <property type="evidence" value="ECO:0007669"/>
    <property type="project" value="UniProtKB-SubCell"/>
</dbReference>
<dbReference type="GO" id="GO:0022857">
    <property type="term" value="F:transmembrane transporter activity"/>
    <property type="evidence" value="ECO:0007669"/>
    <property type="project" value="InterPro"/>
</dbReference>
<dbReference type="CDD" id="cd17315">
    <property type="entry name" value="MFS_GLUT_like"/>
    <property type="match status" value="1"/>
</dbReference>
<dbReference type="Gene3D" id="1.20.1250.20">
    <property type="entry name" value="MFS general substrate transporter like domains"/>
    <property type="match status" value="1"/>
</dbReference>
<dbReference type="InterPro" id="IPR020846">
    <property type="entry name" value="MFS_dom"/>
</dbReference>
<dbReference type="InterPro" id="IPR005828">
    <property type="entry name" value="MFS_sugar_transport-like"/>
</dbReference>
<dbReference type="InterPro" id="IPR036259">
    <property type="entry name" value="MFS_trans_sf"/>
</dbReference>
<dbReference type="InterPro" id="IPR050814">
    <property type="entry name" value="Myo-inositol_Transporter"/>
</dbReference>
<dbReference type="InterPro" id="IPR003663">
    <property type="entry name" value="Sugar/inositol_transpt"/>
</dbReference>
<dbReference type="InterPro" id="IPR005829">
    <property type="entry name" value="Sugar_transporter_CS"/>
</dbReference>
<dbReference type="NCBIfam" id="TIGR00879">
    <property type="entry name" value="SP"/>
    <property type="match status" value="1"/>
</dbReference>
<dbReference type="PANTHER" id="PTHR48020">
    <property type="entry name" value="PROTON MYO-INOSITOL COTRANSPORTER"/>
    <property type="match status" value="1"/>
</dbReference>
<dbReference type="PANTHER" id="PTHR48020:SF12">
    <property type="entry name" value="PROTON MYO-INOSITOL COTRANSPORTER"/>
    <property type="match status" value="1"/>
</dbReference>
<dbReference type="Pfam" id="PF00083">
    <property type="entry name" value="Sugar_tr"/>
    <property type="match status" value="1"/>
</dbReference>
<dbReference type="PRINTS" id="PR00171">
    <property type="entry name" value="SUGRTRNSPORT"/>
</dbReference>
<dbReference type="SUPFAM" id="SSF103473">
    <property type="entry name" value="MFS general substrate transporter"/>
    <property type="match status" value="1"/>
</dbReference>
<dbReference type="PROSITE" id="PS50850">
    <property type="entry name" value="MFS"/>
    <property type="match status" value="1"/>
</dbReference>
<dbReference type="PROSITE" id="PS51257">
    <property type="entry name" value="PROKAR_LIPOPROTEIN"/>
    <property type="match status" value="1"/>
</dbReference>
<dbReference type="PROSITE" id="PS00216">
    <property type="entry name" value="SUGAR_TRANSPORT_1"/>
    <property type="match status" value="1"/>
</dbReference>
<dbReference type="PROSITE" id="PS00217">
    <property type="entry name" value="SUGAR_TRANSPORT_2"/>
    <property type="match status" value="1"/>
</dbReference>
<comment type="function">
    <text evidence="1 3">Sodium-independent facilitative hexose transporter (By similarity). Can transport D-glucose and D-fructose (PubMed:12238947). Can transport D-mannose, D-galactose, D-xylose and D-glucosamine (By similarity).</text>
</comment>
<comment type="catalytic activity">
    <reaction evidence="3">
        <text>D-glucose(out) = D-glucose(in)</text>
        <dbReference type="Rhea" id="RHEA:60376"/>
        <dbReference type="ChEBI" id="CHEBI:4167"/>
    </reaction>
    <physiologicalReaction direction="left-to-right" evidence="5">
        <dbReference type="Rhea" id="RHEA:60377"/>
    </physiologicalReaction>
</comment>
<comment type="catalytic activity">
    <reaction evidence="3">
        <text>D-fructose(out) = D-fructose(in)</text>
        <dbReference type="Rhea" id="RHEA:60372"/>
        <dbReference type="ChEBI" id="CHEBI:37721"/>
    </reaction>
    <physiologicalReaction direction="left-to-right" evidence="5">
        <dbReference type="Rhea" id="RHEA:60373"/>
    </physiologicalReaction>
</comment>
<comment type="catalytic activity">
    <reaction evidence="1">
        <text>D-galactose(in) = D-galactose(out)</text>
        <dbReference type="Rhea" id="RHEA:34915"/>
        <dbReference type="ChEBI" id="CHEBI:4139"/>
    </reaction>
    <physiologicalReaction direction="right-to-left" evidence="5">
        <dbReference type="Rhea" id="RHEA:34917"/>
    </physiologicalReaction>
</comment>
<comment type="catalytic activity">
    <reaction evidence="1">
        <text>D-mannose(out) = D-mannose(in)</text>
        <dbReference type="Rhea" id="RHEA:78391"/>
        <dbReference type="ChEBI" id="CHEBI:4208"/>
    </reaction>
    <physiologicalReaction direction="left-to-right" evidence="5">
        <dbReference type="Rhea" id="RHEA:78392"/>
    </physiologicalReaction>
</comment>
<comment type="catalytic activity">
    <reaction evidence="1">
        <text>D-glucosamine(out) = D-glucosamine(in)</text>
        <dbReference type="Rhea" id="RHEA:78423"/>
        <dbReference type="ChEBI" id="CHEBI:58723"/>
    </reaction>
    <physiologicalReaction direction="left-to-right" evidence="5">
        <dbReference type="Rhea" id="RHEA:78424"/>
    </physiologicalReaction>
</comment>
<comment type="catalytic activity">
    <reaction evidence="1">
        <text>D-xylose(out) = D-xylose(in)</text>
        <dbReference type="Rhea" id="RHEA:78427"/>
        <dbReference type="ChEBI" id="CHEBI:53455"/>
    </reaction>
    <physiologicalReaction direction="left-to-right" evidence="5">
        <dbReference type="Rhea" id="RHEA:78428"/>
    </physiologicalReaction>
</comment>
<comment type="activity regulation">
    <text evidence="3">Inhibited by cytochalasin B.</text>
</comment>
<comment type="biophysicochemical properties">
    <kinetics>
        <KM evidence="3">0.12 mM for D-glucose</KM>
        <KM evidence="3">2.94 mM for D-fructose</KM>
    </kinetics>
    <temperatureDependence>
        <text evidence="3">Active from 32 to 42 degrees Celsius (PubMed:12238947). Retains 50% of its maximal activity at 20 degrees Celsius (PubMed:12238947).</text>
    </temperatureDependence>
</comment>
<comment type="subunit">
    <text evidence="1">Homodimer.</text>
</comment>
<comment type="subcellular location">
    <subcellularLocation>
        <location evidence="1">Cell membrane</location>
        <topology evidence="2">Multi-pass membrane protein</topology>
    </subcellularLocation>
</comment>
<comment type="miscellaneous">
    <text evidence="3">Experiments with hexose analogs indicate that hydroxyl groups in the C-3, C-4 and C-6 positions in glucose are important for high affinity interactions with HT1.</text>
</comment>
<comment type="similarity">
    <text evidence="5">Belongs to the major facilitator superfamily. Sugar transporter (TC 2.A.1.1) family.</text>
</comment>
<protein>
    <recommendedName>
        <fullName evidence="4">Hexose transporter 1</fullName>
        <shortName evidence="4">PyHT1</shortName>
    </recommendedName>
</protein>